<sequence length="542" mass="59087">MQALLSVYNKSGIVEFSKILSSKGFNLISTGGTAKSLVDNGLKVQQVSDVTEYPEMLDGRVKTLHPKIHGGLLARPELAHHQADLNKYNIKPISIVVVNLYPFVETVSKESTTLEEAIENIDIGGHTLIRASSKNFQNVLIIVDPSDYKWIGERIQSSTDSTNVLSSITLEERKKLALKAFQHGCSYDAAVSQYLSKVELTNATTIQGVKGTDSASVNVEFPQTFLPLYEKKNDLRYGENPHQKAALYQCPGTGGIANAQLLHGPALSYNNILDGDAALKAVREFDRCACVVIKHTNPCGLSVGVNDSEQAEVYKRAFNGDPKSAYGGILGFNRTLTLETATALKSVFYEVIIAPDYTEDALALLSKKEKLRILRIPEAANQIQFTQPDIRTITGGALLQSPNPIIRGDLAEATKNWKVVTENKPTEQQMKDLLFAWRVSKHVKSNAIVLSKDETIVAIGAGQPNRSQSVDICMKVGGDKVKGSVLASDAFFPFADSIDLAHQGNIACIVQPGGSIRDQEVIDAANKYGIPMVFTGNRNFLH</sequence>
<reference key="1">
    <citation type="journal article" date="2002" name="Nature">
        <title>Sequence and analysis of chromosome 2 of Dictyostelium discoideum.</title>
        <authorList>
            <person name="Gloeckner G."/>
            <person name="Eichinger L."/>
            <person name="Szafranski K."/>
            <person name="Pachebat J.A."/>
            <person name="Bankier A.T."/>
            <person name="Dear P.H."/>
            <person name="Lehmann R."/>
            <person name="Baumgart C."/>
            <person name="Parra G."/>
            <person name="Abril J.F."/>
            <person name="Guigo R."/>
            <person name="Kumpf K."/>
            <person name="Tunggal B."/>
            <person name="Cox E.C."/>
            <person name="Quail M.A."/>
            <person name="Platzer M."/>
            <person name="Rosenthal A."/>
            <person name="Noegel A.A."/>
        </authorList>
    </citation>
    <scope>NUCLEOTIDE SEQUENCE [LARGE SCALE GENOMIC DNA]</scope>
    <source>
        <strain>AX4</strain>
    </source>
</reference>
<reference key="2">
    <citation type="journal article" date="2005" name="Nature">
        <title>The genome of the social amoeba Dictyostelium discoideum.</title>
        <authorList>
            <person name="Eichinger L."/>
            <person name="Pachebat J.A."/>
            <person name="Gloeckner G."/>
            <person name="Rajandream M.A."/>
            <person name="Sucgang R."/>
            <person name="Berriman M."/>
            <person name="Song J."/>
            <person name="Olsen R."/>
            <person name="Szafranski K."/>
            <person name="Xu Q."/>
            <person name="Tunggal B."/>
            <person name="Kummerfeld S."/>
            <person name="Madera M."/>
            <person name="Konfortov B.A."/>
            <person name="Rivero F."/>
            <person name="Bankier A.T."/>
            <person name="Lehmann R."/>
            <person name="Hamlin N."/>
            <person name="Davies R."/>
            <person name="Gaudet P."/>
            <person name="Fey P."/>
            <person name="Pilcher K."/>
            <person name="Chen G."/>
            <person name="Saunders D."/>
            <person name="Sodergren E.J."/>
            <person name="Davis P."/>
            <person name="Kerhornou A."/>
            <person name="Nie X."/>
            <person name="Hall N."/>
            <person name="Anjard C."/>
            <person name="Hemphill L."/>
            <person name="Bason N."/>
            <person name="Farbrother P."/>
            <person name="Desany B."/>
            <person name="Just E."/>
            <person name="Morio T."/>
            <person name="Rost R."/>
            <person name="Churcher C.M."/>
            <person name="Cooper J."/>
            <person name="Haydock S."/>
            <person name="van Driessche N."/>
            <person name="Cronin A."/>
            <person name="Goodhead I."/>
            <person name="Muzny D.M."/>
            <person name="Mourier T."/>
            <person name="Pain A."/>
            <person name="Lu M."/>
            <person name="Harper D."/>
            <person name="Lindsay R."/>
            <person name="Hauser H."/>
            <person name="James K.D."/>
            <person name="Quiles M."/>
            <person name="Madan Babu M."/>
            <person name="Saito T."/>
            <person name="Buchrieser C."/>
            <person name="Wardroper A."/>
            <person name="Felder M."/>
            <person name="Thangavelu M."/>
            <person name="Johnson D."/>
            <person name="Knights A."/>
            <person name="Loulseged H."/>
            <person name="Mungall K.L."/>
            <person name="Oliver K."/>
            <person name="Price C."/>
            <person name="Quail M.A."/>
            <person name="Urushihara H."/>
            <person name="Hernandez J."/>
            <person name="Rabbinowitsch E."/>
            <person name="Steffen D."/>
            <person name="Sanders M."/>
            <person name="Ma J."/>
            <person name="Kohara Y."/>
            <person name="Sharp S."/>
            <person name="Simmonds M.N."/>
            <person name="Spiegler S."/>
            <person name="Tivey A."/>
            <person name="Sugano S."/>
            <person name="White B."/>
            <person name="Walker D."/>
            <person name="Woodward J.R."/>
            <person name="Winckler T."/>
            <person name="Tanaka Y."/>
            <person name="Shaulsky G."/>
            <person name="Schleicher M."/>
            <person name="Weinstock G.M."/>
            <person name="Rosenthal A."/>
            <person name="Cox E.C."/>
            <person name="Chisholm R.L."/>
            <person name="Gibbs R.A."/>
            <person name="Loomis W.F."/>
            <person name="Platzer M."/>
            <person name="Kay R.R."/>
            <person name="Williams J.G."/>
            <person name="Dear P.H."/>
            <person name="Noegel A.A."/>
            <person name="Barrell B.G."/>
            <person name="Kuspa A."/>
        </authorList>
    </citation>
    <scope>NUCLEOTIDE SEQUENCE [LARGE SCALE GENOMIC DNA]</scope>
    <source>
        <strain>AX4</strain>
    </source>
</reference>
<reference key="3">
    <citation type="journal article" date="2006" name="Mol. Cell. Proteomics">
        <title>Proteomics fingerprinting of phagosome maturation and evidence for the role of a Galpha during uptake.</title>
        <authorList>
            <person name="Gotthardt D."/>
            <person name="Blancheteau V."/>
            <person name="Bosserhoff A."/>
            <person name="Ruppert T."/>
            <person name="Delorenzi M."/>
            <person name="Soldati T."/>
        </authorList>
    </citation>
    <scope>IDENTIFICATION BY MASS SPECTROMETRY [LARGE SCALE ANALYSIS]</scope>
    <source>
        <strain>AX2</strain>
    </source>
</reference>
<accession>Q86L14</accession>
<accession>Q550I9</accession>
<keyword id="KW-0963">Cytoplasm</keyword>
<keyword id="KW-0378">Hydrolase</keyword>
<keyword id="KW-0511">Multifunctional enzyme</keyword>
<keyword id="KW-0658">Purine biosynthesis</keyword>
<keyword id="KW-1185">Reference proteome</keyword>
<keyword id="KW-0808">Transferase</keyword>
<proteinExistence type="evidence at protein level"/>
<name>PUR9_DICDI</name>
<protein>
    <recommendedName>
        <fullName>Bifunctional purine biosynthesis protein purH</fullName>
    </recommendedName>
    <domain>
        <recommendedName>
            <fullName>Phosphoribosylaminoimidazolecarboxamide formyltransferase</fullName>
            <ecNumber evidence="3">2.1.2.3</ecNumber>
        </recommendedName>
        <alternativeName>
            <fullName>AICAR transformylase</fullName>
        </alternativeName>
    </domain>
    <domain>
        <recommendedName>
            <fullName evidence="5">Inosine 5'-monophosphate cyclohydrolase</fullName>
            <shortName evidence="5">IMP cyclohydrolase</shortName>
            <ecNumber evidence="3">3.5.4.10</ecNumber>
        </recommendedName>
        <alternativeName>
            <fullName>ATIC</fullName>
        </alternativeName>
        <alternativeName>
            <fullName>IMP synthase</fullName>
        </alternativeName>
        <alternativeName>
            <fullName>Inosinicase</fullName>
        </alternativeName>
    </domain>
</protein>
<gene>
    <name type="primary">purH</name>
    <name type="ORF">DDB_G0277087</name>
</gene>
<organism>
    <name type="scientific">Dictyostelium discoideum</name>
    <name type="common">Social amoeba</name>
    <dbReference type="NCBI Taxonomy" id="44689"/>
    <lineage>
        <taxon>Eukaryota</taxon>
        <taxon>Amoebozoa</taxon>
        <taxon>Evosea</taxon>
        <taxon>Eumycetozoa</taxon>
        <taxon>Dictyostelia</taxon>
        <taxon>Dictyosteliales</taxon>
        <taxon>Dictyosteliaceae</taxon>
        <taxon>Dictyostelium</taxon>
    </lineage>
</organism>
<dbReference type="EC" id="2.1.2.3" evidence="3"/>
<dbReference type="EC" id="3.5.4.10" evidence="3"/>
<dbReference type="EMBL" id="AAFI02000019">
    <property type="protein sequence ID" value="EAL69045.1"/>
    <property type="molecule type" value="Genomic_DNA"/>
</dbReference>
<dbReference type="RefSeq" id="XP_642943.1">
    <property type="nucleotide sequence ID" value="XM_637851.1"/>
</dbReference>
<dbReference type="SMR" id="Q86L14"/>
<dbReference type="FunCoup" id="Q86L14">
    <property type="interactions" value="668"/>
</dbReference>
<dbReference type="STRING" id="44689.Q86L14"/>
<dbReference type="PaxDb" id="44689-DDB0230095"/>
<dbReference type="EnsemblProtists" id="EAL69045">
    <property type="protein sequence ID" value="EAL69045"/>
    <property type="gene ID" value="DDB_G0277087"/>
</dbReference>
<dbReference type="GeneID" id="8620812"/>
<dbReference type="KEGG" id="ddi:DDB_G0277087"/>
<dbReference type="dictyBase" id="DDB_G0277087">
    <property type="gene designation" value="purH"/>
</dbReference>
<dbReference type="VEuPathDB" id="AmoebaDB:DDB_G0277087"/>
<dbReference type="eggNOG" id="KOG2555">
    <property type="taxonomic scope" value="Eukaryota"/>
</dbReference>
<dbReference type="HOGENOM" id="CLU_016316_5_2_1"/>
<dbReference type="InParanoid" id="Q86L14"/>
<dbReference type="OMA" id="IKHNNPC"/>
<dbReference type="PhylomeDB" id="Q86L14"/>
<dbReference type="Reactome" id="R-DDI-73817">
    <property type="pathway name" value="Purine ribonucleoside monophosphate biosynthesis"/>
</dbReference>
<dbReference type="UniPathway" id="UPA00074">
    <property type="reaction ID" value="UER00133"/>
</dbReference>
<dbReference type="UniPathway" id="UPA00074">
    <property type="reaction ID" value="UER00135"/>
</dbReference>
<dbReference type="PRO" id="PR:Q86L14"/>
<dbReference type="Proteomes" id="UP000002195">
    <property type="component" value="Chromosome 2"/>
</dbReference>
<dbReference type="GO" id="GO:0005829">
    <property type="term" value="C:cytosol"/>
    <property type="evidence" value="ECO:0000250"/>
    <property type="project" value="dictyBase"/>
</dbReference>
<dbReference type="GO" id="GO:0045335">
    <property type="term" value="C:phagocytic vesicle"/>
    <property type="evidence" value="ECO:0007005"/>
    <property type="project" value="dictyBase"/>
</dbReference>
<dbReference type="GO" id="GO:0003937">
    <property type="term" value="F:IMP cyclohydrolase activity"/>
    <property type="evidence" value="ECO:0000250"/>
    <property type="project" value="dictyBase"/>
</dbReference>
<dbReference type="GO" id="GO:0004643">
    <property type="term" value="F:phosphoribosylaminoimidazolecarboxamide formyltransferase activity"/>
    <property type="evidence" value="ECO:0000250"/>
    <property type="project" value="dictyBase"/>
</dbReference>
<dbReference type="GO" id="GO:0006189">
    <property type="term" value="P:'de novo' IMP biosynthetic process"/>
    <property type="evidence" value="ECO:0000250"/>
    <property type="project" value="dictyBase"/>
</dbReference>
<dbReference type="GO" id="GO:0006164">
    <property type="term" value="P:purine nucleotide biosynthetic process"/>
    <property type="evidence" value="ECO:0000250"/>
    <property type="project" value="dictyBase"/>
</dbReference>
<dbReference type="CDD" id="cd01421">
    <property type="entry name" value="IMPCH"/>
    <property type="match status" value="1"/>
</dbReference>
<dbReference type="FunFam" id="3.40.140.20:FF:000001">
    <property type="entry name" value="Bifunctional purine biosynthesis protein PurH"/>
    <property type="match status" value="1"/>
</dbReference>
<dbReference type="FunFam" id="3.40.50.1380:FF:000001">
    <property type="entry name" value="Bifunctional purine biosynthesis protein PurH"/>
    <property type="match status" value="1"/>
</dbReference>
<dbReference type="Gene3D" id="3.40.140.20">
    <property type="match status" value="2"/>
</dbReference>
<dbReference type="Gene3D" id="3.40.50.1380">
    <property type="entry name" value="Methylglyoxal synthase-like domain"/>
    <property type="match status" value="1"/>
</dbReference>
<dbReference type="HAMAP" id="MF_00139">
    <property type="entry name" value="PurH"/>
    <property type="match status" value="1"/>
</dbReference>
<dbReference type="InterPro" id="IPR024051">
    <property type="entry name" value="AICAR_Tfase_dup_dom_sf"/>
</dbReference>
<dbReference type="InterPro" id="IPR016193">
    <property type="entry name" value="Cytidine_deaminase-like"/>
</dbReference>
<dbReference type="InterPro" id="IPR011607">
    <property type="entry name" value="MGS-like_dom"/>
</dbReference>
<dbReference type="InterPro" id="IPR036914">
    <property type="entry name" value="MGS-like_dom_sf"/>
</dbReference>
<dbReference type="InterPro" id="IPR002695">
    <property type="entry name" value="PurH-like"/>
</dbReference>
<dbReference type="NCBIfam" id="NF002049">
    <property type="entry name" value="PRK00881.1"/>
    <property type="match status" value="1"/>
</dbReference>
<dbReference type="NCBIfam" id="TIGR00355">
    <property type="entry name" value="purH"/>
    <property type="match status" value="1"/>
</dbReference>
<dbReference type="PANTHER" id="PTHR11692:SF0">
    <property type="entry name" value="BIFUNCTIONAL PURINE BIOSYNTHESIS PROTEIN ATIC"/>
    <property type="match status" value="1"/>
</dbReference>
<dbReference type="PANTHER" id="PTHR11692">
    <property type="entry name" value="BIFUNCTIONAL PURINE BIOSYNTHESIS PROTEIN PURH"/>
    <property type="match status" value="1"/>
</dbReference>
<dbReference type="Pfam" id="PF01808">
    <property type="entry name" value="AICARFT_IMPCHas"/>
    <property type="match status" value="1"/>
</dbReference>
<dbReference type="Pfam" id="PF02142">
    <property type="entry name" value="MGS"/>
    <property type="match status" value="1"/>
</dbReference>
<dbReference type="PIRSF" id="PIRSF000414">
    <property type="entry name" value="AICARFT_IMPCHas"/>
    <property type="match status" value="1"/>
</dbReference>
<dbReference type="SMART" id="SM00798">
    <property type="entry name" value="AICARFT_IMPCHas"/>
    <property type="match status" value="1"/>
</dbReference>
<dbReference type="SMART" id="SM00851">
    <property type="entry name" value="MGS"/>
    <property type="match status" value="1"/>
</dbReference>
<dbReference type="SUPFAM" id="SSF53927">
    <property type="entry name" value="Cytidine deaminase-like"/>
    <property type="match status" value="1"/>
</dbReference>
<dbReference type="SUPFAM" id="SSF52335">
    <property type="entry name" value="Methylglyoxal synthase-like"/>
    <property type="match status" value="1"/>
</dbReference>
<dbReference type="PROSITE" id="PS51855">
    <property type="entry name" value="MGS"/>
    <property type="match status" value="1"/>
</dbReference>
<comment type="function">
    <text evidence="3">Bifunctional enzyme that catalyzes the last two steps of purine biosynthesis. Acts as a transformylase that incorporates a formyl group to the AMP analog AICAR (5-amino-1-(5-phospho-beta-D-ribosyl)imidazole-4-carboxamide) to produce the intermediate formyl-AICAR (FAICAR). Also catalyzes the cyclization of FAICAR to IMP.</text>
</comment>
<comment type="catalytic activity">
    <reaction evidence="3">
        <text>(6R)-10-formyltetrahydrofolate + 5-amino-1-(5-phospho-beta-D-ribosyl)imidazole-4-carboxamide = 5-formamido-1-(5-phospho-D-ribosyl)imidazole-4-carboxamide + (6S)-5,6,7,8-tetrahydrofolate</text>
        <dbReference type="Rhea" id="RHEA:22192"/>
        <dbReference type="ChEBI" id="CHEBI:57453"/>
        <dbReference type="ChEBI" id="CHEBI:58467"/>
        <dbReference type="ChEBI" id="CHEBI:58475"/>
        <dbReference type="ChEBI" id="CHEBI:195366"/>
        <dbReference type="EC" id="2.1.2.3"/>
    </reaction>
</comment>
<comment type="catalytic activity">
    <reaction evidence="3">
        <text>IMP + H2O = 5-formamido-1-(5-phospho-D-ribosyl)imidazole-4-carboxamide</text>
        <dbReference type="Rhea" id="RHEA:18445"/>
        <dbReference type="ChEBI" id="CHEBI:15377"/>
        <dbReference type="ChEBI" id="CHEBI:58053"/>
        <dbReference type="ChEBI" id="CHEBI:58467"/>
        <dbReference type="EC" id="3.5.4.10"/>
    </reaction>
</comment>
<comment type="pathway">
    <text>Purine metabolism; IMP biosynthesis via de novo pathway; 5-formamido-1-(5-phospho-D-ribosyl)imidazole-4-carboxamide from 5-amino-1-(5-phospho-D-ribosyl)imidazole-4-carboxamide (10-formyl THF route): step 1/1.</text>
</comment>
<comment type="pathway">
    <text>Purine metabolism; IMP biosynthesis via de novo pathway; IMP from 5-formamido-1-(5-phospho-D-ribosyl)imidazole-4-carboxamide: step 1/1.</text>
</comment>
<comment type="subunit">
    <text evidence="3">Homodimer.</text>
</comment>
<comment type="subcellular location">
    <subcellularLocation>
        <location evidence="3">Cytoplasm</location>
        <location evidence="3">Cytosol</location>
    </subcellularLocation>
</comment>
<comment type="domain">
    <text evidence="2">The IMP cyclohydrolase activity resides in the N-terminal region.</text>
</comment>
<comment type="similarity">
    <text evidence="5">Belongs to the PurH family.</text>
</comment>
<evidence type="ECO:0000250" key="1">
    <source>
        <dbReference type="UniProtKB" id="P31335"/>
    </source>
</evidence>
<evidence type="ECO:0000250" key="2">
    <source>
        <dbReference type="UniProtKB" id="P31939"/>
    </source>
</evidence>
<evidence type="ECO:0000250" key="3">
    <source>
        <dbReference type="UniProtKB" id="P54113"/>
    </source>
</evidence>
<evidence type="ECO:0000255" key="4">
    <source>
        <dbReference type="PROSITE-ProRule" id="PRU01202"/>
    </source>
</evidence>
<evidence type="ECO:0000305" key="5"/>
<feature type="chain" id="PRO_0000329022" description="Bifunctional purine biosynthesis protein purH">
    <location>
        <begin position="1"/>
        <end position="542"/>
    </location>
</feature>
<feature type="domain" description="MGS-like" evidence="4">
    <location>
        <begin position="1"/>
        <end position="143"/>
    </location>
</feature>
<feature type="active site" description="Proton donor/acceptor; for FAICAR cyclization activity" evidence="2">
    <location>
        <position position="134"/>
    </location>
</feature>
<feature type="active site" description="Proton acceptor; for AICAR formyltransferase activity" evidence="2">
    <location>
        <position position="295"/>
    </location>
</feature>
<feature type="binding site" evidence="2">
    <location>
        <begin position="30"/>
        <end position="33"/>
    </location>
    <ligand>
        <name>IMP</name>
        <dbReference type="ChEBI" id="CHEBI:58053"/>
    </ligand>
</feature>
<feature type="binding site" evidence="2">
    <location>
        <begin position="60"/>
        <end position="63"/>
    </location>
    <ligand>
        <name>IMP</name>
        <dbReference type="ChEBI" id="CHEBI:58053"/>
    </ligand>
</feature>
<feature type="binding site" evidence="2">
    <location>
        <begin position="122"/>
        <end position="123"/>
    </location>
    <ligand>
        <name>IMP</name>
        <dbReference type="ChEBI" id="CHEBI:58053"/>
    </ligand>
</feature>
<feature type="binding site" description="in other chain" evidence="2">
    <location>
        <begin position="236"/>
        <end position="237"/>
    </location>
    <ligand>
        <name>5-amino-1-(5-phospho-beta-D-ribosyl)imidazole-4-carboxamide</name>
        <dbReference type="ChEBI" id="CHEBI:58475"/>
        <note>ligand shared between dimeric partners</note>
    </ligand>
</feature>
<feature type="binding site" description="in other chain" evidence="2">
    <location>
        <position position="295"/>
    </location>
    <ligand>
        <name>5-amino-1-(5-phospho-beta-D-ribosyl)imidazole-4-carboxamide</name>
        <dbReference type="ChEBI" id="CHEBI:58475"/>
        <note>ligand shared between dimeric partners</note>
    </ligand>
</feature>
<feature type="binding site" description="in other chain" evidence="2">
    <location>
        <position position="327"/>
    </location>
    <ligand>
        <name>5-amino-1-(5-phospho-beta-D-ribosyl)imidazole-4-carboxamide</name>
        <dbReference type="ChEBI" id="CHEBI:58475"/>
        <note>ligand shared between dimeric partners</note>
    </ligand>
</feature>
<feature type="binding site" description="in other chain" evidence="2">
    <location>
        <position position="350"/>
    </location>
    <ligand>
        <name>5-amino-1-(5-phospho-beta-D-ribosyl)imidazole-4-carboxamide</name>
        <dbReference type="ChEBI" id="CHEBI:58475"/>
        <note>ligand shared between dimeric partners</note>
    </ligand>
</feature>
<feature type="binding site" evidence="2">
    <location>
        <position position="446"/>
    </location>
    <ligand>
        <name>5-amino-1-(5-phospho-beta-D-ribosyl)imidazole-4-carboxamide</name>
        <dbReference type="ChEBI" id="CHEBI:58475"/>
        <note>ligand shared between dimeric partners</note>
    </ligand>
</feature>
<feature type="binding site" evidence="2">
    <location>
        <position position="466"/>
    </location>
    <ligand>
        <name>5-amino-1-(5-phospho-beta-D-ribosyl)imidazole-4-carboxamide</name>
        <dbReference type="ChEBI" id="CHEBI:58475"/>
        <note>ligand shared between dimeric partners</note>
    </ligand>
</feature>
<feature type="binding site" evidence="2">
    <location>
        <position position="491"/>
    </location>
    <ligand>
        <name>5-amino-1-(5-phospho-beta-D-ribosyl)imidazole-4-carboxamide</name>
        <dbReference type="ChEBI" id="CHEBI:58475"/>
        <note>ligand shared between dimeric partners</note>
    </ligand>
</feature>
<feature type="binding site" evidence="1">
    <location>
        <position position="496"/>
    </location>
    <ligand>
        <name>(6R)-10-formyltetrahydrofolate</name>
        <dbReference type="ChEBI" id="CHEBI:195366"/>
    </ligand>
</feature>
<feature type="binding site" evidence="2">
    <location>
        <position position="538"/>
    </location>
    <ligand>
        <name>5-amino-1-(5-phospho-beta-D-ribosyl)imidazole-4-carboxamide</name>
        <dbReference type="ChEBI" id="CHEBI:58475"/>
        <note>ligand shared between dimeric partners</note>
    </ligand>
</feature>
<feature type="site" description="Transition state stabilizer" evidence="2">
    <location>
        <position position="294"/>
    </location>
</feature>